<keyword id="KW-0150">Chloroplast</keyword>
<keyword id="KW-0903">Direct protein sequencing</keyword>
<keyword id="KW-0472">Membrane</keyword>
<keyword id="KW-0934">Plastid</keyword>
<keyword id="KW-1001">Plastid inner membrane</keyword>
<keyword id="KW-0653">Protein transport</keyword>
<keyword id="KW-0809">Transit peptide</keyword>
<keyword id="KW-0812">Transmembrane</keyword>
<keyword id="KW-1133">Transmembrane helix</keyword>
<keyword id="KW-0813">Transport</keyword>
<sequence>MIQNGGTVSQGSVLCYACQIPAKVAVSSIRSFWGHSLENKPRGMTFTDMSATSSLLLSGGQNFLSRTIPVLPTLHKSSTTPRATKDSSGFRFPPMTKKPRWWWRTLSCIPYLLPFHQAWMYARTAYHLHPFIPYFQPMTYPFLMAIGTLPRWSLIAYFLIAYLTIVRRKEWPHFFRFHVAVGMLIEIALQVTGIVSRWMPRSFYWGKLGMHFWTTAFFVFLFTTIECIRCALVGMYADVPFVCDAAYIQIPHE</sequence>
<feature type="transit peptide" description="Chloroplast" evidence="5">
    <location>
        <begin position="1"/>
        <end position="82"/>
    </location>
</feature>
<feature type="chain" id="PRO_0000413667" description="Protein TIC 20, chloroplastic">
    <location>
        <begin position="83"/>
        <end position="253"/>
    </location>
</feature>
<feature type="transmembrane region" description="Helical" evidence="1">
    <location>
        <begin position="101"/>
        <end position="120"/>
    </location>
</feature>
<feature type="transmembrane region" description="Helical" evidence="1">
    <location>
        <begin position="142"/>
        <end position="162"/>
    </location>
</feature>
<feature type="transmembrane region" description="Helical" evidence="1">
    <location>
        <begin position="174"/>
        <end position="194"/>
    </location>
</feature>
<feature type="transmembrane region" description="Helical" evidence="1">
    <location>
        <begin position="208"/>
        <end position="228"/>
    </location>
</feature>
<accession>Q9ZST8</accession>
<dbReference type="EMBL" id="AF095285">
    <property type="protein sequence ID" value="AAC64607.1"/>
    <property type="molecule type" value="mRNA"/>
</dbReference>
<dbReference type="SMR" id="Q9ZST8"/>
<dbReference type="TCDB" id="3.A.9.1.1">
    <property type="family name" value="the chloroplast envelope protein translocase (cept or tic-toc) family"/>
</dbReference>
<dbReference type="EnsemblPlants" id="Psat7g252800.1">
    <property type="protein sequence ID" value="Psat7g252800.1.cds"/>
    <property type="gene ID" value="Psat7g252800"/>
</dbReference>
<dbReference type="Gramene" id="Psat7g252800.1">
    <property type="protein sequence ID" value="Psat7g252800.1.cds"/>
    <property type="gene ID" value="Psat7g252800"/>
</dbReference>
<dbReference type="GO" id="GO:0009706">
    <property type="term" value="C:chloroplast inner membrane"/>
    <property type="evidence" value="ECO:0007669"/>
    <property type="project" value="UniProtKB-SubCell"/>
</dbReference>
<dbReference type="GO" id="GO:0015031">
    <property type="term" value="P:protein transport"/>
    <property type="evidence" value="ECO:0007669"/>
    <property type="project" value="UniProtKB-KW"/>
</dbReference>
<dbReference type="InterPro" id="IPR005691">
    <property type="entry name" value="Tic20"/>
</dbReference>
<dbReference type="NCBIfam" id="TIGR00994">
    <property type="entry name" value="3a0901s05TIC20"/>
    <property type="match status" value="1"/>
</dbReference>
<dbReference type="PANTHER" id="PTHR33510:SF9">
    <property type="entry name" value="HIT-TYPE ZINC FINGER FAMILY PROTEIN-RELATED"/>
    <property type="match status" value="1"/>
</dbReference>
<dbReference type="PANTHER" id="PTHR33510">
    <property type="entry name" value="PROTEIN TIC 20-II, CHLOROPLASTIC"/>
    <property type="match status" value="1"/>
</dbReference>
<dbReference type="Pfam" id="PF16166">
    <property type="entry name" value="TIC20"/>
    <property type="match status" value="1"/>
</dbReference>
<comment type="function">
    <text evidence="3 4 5">Involved in protein precursor import into chloroplasts. May be part of an intermediate translocation complex acting as a protein-conducting channel at the inner envelope. Seems to be specific for photosynthesis-related pre-proteins.</text>
</comment>
<comment type="subunit">
    <text evidence="5">Part of the Tic complex. Interacts with TIC22 and with the Toc complex.</text>
</comment>
<comment type="subcellular location">
    <subcellularLocation>
        <location evidence="6">Plastid</location>
        <location evidence="6">Chloroplast inner membrane</location>
        <topology evidence="6">Multi-pass membrane protein</topology>
    </subcellularLocation>
</comment>
<comment type="induction">
    <text evidence="2">Down-regulated by heat.</text>
</comment>
<comment type="similarity">
    <text evidence="6">Belongs to the Tic20 family.</text>
</comment>
<protein>
    <recommendedName>
        <fullName>Protein TIC 20, chloroplastic</fullName>
    </recommendedName>
    <alternativeName>
        <fullName>Translocon at the inner envelope membrane of chloroplasts 20</fullName>
        <shortName>PsTIC20</shortName>
    </alternativeName>
</protein>
<name>TIC20_PEA</name>
<reference key="1">
    <citation type="journal article" date="1998" name="J. Cell Biol.">
        <title>Tic20 and Tic22 are new components of the protein import apparatus at the chloroplast inner envelope membrane.</title>
        <authorList>
            <person name="Kouranov A."/>
            <person name="Chen X."/>
            <person name="Fuks B."/>
            <person name="Schnell D.J."/>
        </authorList>
    </citation>
    <scope>NUCLEOTIDE SEQUENCE [MRNA]</scope>
    <scope>PROTEIN SEQUENCE OF 83-97</scope>
    <scope>FUNCTION</scope>
    <scope>SUBCELLULAR LOCATION</scope>
    <scope>INTERACTION WITH TIC22</scope>
</reference>
<reference key="2">
    <citation type="journal article" date="1996" name="J. Cell Biol.">
        <title>Two components of the chloroplast protein import apparatus, IAP86 and IAP75, interact with the transit sequence during the recognition and translocation of precursor proteins at the outer envelope.</title>
        <authorList>
            <person name="Ma Y."/>
            <person name="Kouranov A."/>
            <person name="LaSala S.E."/>
            <person name="Schnell D.J."/>
        </authorList>
    </citation>
    <scope>FUNCTION</scope>
</reference>
<reference key="3">
    <citation type="journal article" date="1997" name="J. Cell Biol.">
        <title>Analysis of the interactions of preproteins with the import machinery over the course of protein import into chloroplasts.</title>
        <authorList>
            <person name="Kouranov A."/>
            <person name="Schnell D.J."/>
        </authorList>
    </citation>
    <scope>FUNCTION</scope>
</reference>
<reference key="4">
    <citation type="journal article" date="2009" name="Plant Physiol.">
        <title>Role of temperature stress on chloroplast biogenesis and protein import in pea.</title>
        <authorList>
            <person name="Dutta S."/>
            <person name="Mohanty S."/>
            <person name="Tripathy B.C."/>
        </authorList>
    </citation>
    <scope>INDUCTION BY HEAT</scope>
</reference>
<reference key="5">
    <citation type="journal article" date="2010" name="Biochim. Biophys. Acta">
        <title>Protein import into chloroplasts: the Tic complex and its regulation.</title>
        <authorList>
            <person name="Kovacs-Bogdan E."/>
            <person name="Soll J."/>
            <person name="Bolter B."/>
        </authorList>
    </citation>
    <scope>REVIEW</scope>
</reference>
<proteinExistence type="evidence at protein level"/>
<gene>
    <name type="primary">TIC20</name>
    <name type="synonym">IAP21</name>
    <name type="synonym">TIC(21)</name>
</gene>
<organism>
    <name type="scientific">Pisum sativum</name>
    <name type="common">Garden pea</name>
    <name type="synonym">Lathyrus oleraceus</name>
    <dbReference type="NCBI Taxonomy" id="3888"/>
    <lineage>
        <taxon>Eukaryota</taxon>
        <taxon>Viridiplantae</taxon>
        <taxon>Streptophyta</taxon>
        <taxon>Embryophyta</taxon>
        <taxon>Tracheophyta</taxon>
        <taxon>Spermatophyta</taxon>
        <taxon>Magnoliopsida</taxon>
        <taxon>eudicotyledons</taxon>
        <taxon>Gunneridae</taxon>
        <taxon>Pentapetalae</taxon>
        <taxon>rosids</taxon>
        <taxon>fabids</taxon>
        <taxon>Fabales</taxon>
        <taxon>Fabaceae</taxon>
        <taxon>Papilionoideae</taxon>
        <taxon>50 kb inversion clade</taxon>
        <taxon>NPAAA clade</taxon>
        <taxon>Hologalegina</taxon>
        <taxon>IRL clade</taxon>
        <taxon>Fabeae</taxon>
        <taxon>Pisum</taxon>
    </lineage>
</organism>
<evidence type="ECO:0000255" key="1"/>
<evidence type="ECO:0000269" key="2">
    <source>
    </source>
</evidence>
<evidence type="ECO:0000269" key="3">
    <source>
    </source>
</evidence>
<evidence type="ECO:0000269" key="4">
    <source>
    </source>
</evidence>
<evidence type="ECO:0000269" key="5">
    <source>
    </source>
</evidence>
<evidence type="ECO:0000305" key="6"/>